<dbReference type="EMBL" id="AF528889">
    <property type="protein sequence ID" value="AAQ09343.1"/>
    <property type="molecule type" value="Genomic_DNA"/>
</dbReference>
<dbReference type="RefSeq" id="YP_009578771.1">
    <property type="nucleotide sequence ID" value="NC_041502.1"/>
</dbReference>
<dbReference type="SMR" id="Q6EYN0"/>
<dbReference type="GeneID" id="39704595"/>
<dbReference type="GO" id="GO:0009535">
    <property type="term" value="C:chloroplast thylakoid membrane"/>
    <property type="evidence" value="ECO:0007669"/>
    <property type="project" value="UniProtKB-SubCell"/>
</dbReference>
<dbReference type="GO" id="GO:0009539">
    <property type="term" value="C:photosystem II reaction center"/>
    <property type="evidence" value="ECO:0007669"/>
    <property type="project" value="InterPro"/>
</dbReference>
<dbReference type="GO" id="GO:0015979">
    <property type="term" value="P:photosynthesis"/>
    <property type="evidence" value="ECO:0007669"/>
    <property type="project" value="UniProtKB-UniRule"/>
</dbReference>
<dbReference type="HAMAP" id="MF_01317">
    <property type="entry name" value="PSII_PsbL"/>
    <property type="match status" value="1"/>
</dbReference>
<dbReference type="InterPro" id="IPR003372">
    <property type="entry name" value="PSII_PsbL"/>
</dbReference>
<dbReference type="InterPro" id="IPR037266">
    <property type="entry name" value="PSII_PsbL_sf"/>
</dbReference>
<dbReference type="NCBIfam" id="NF001972">
    <property type="entry name" value="PRK00753.1"/>
    <property type="match status" value="1"/>
</dbReference>
<dbReference type="Pfam" id="PF02419">
    <property type="entry name" value="PsbL"/>
    <property type="match status" value="1"/>
</dbReference>
<dbReference type="SUPFAM" id="SSF161017">
    <property type="entry name" value="Photosystem II reaction center protein L, PsbL"/>
    <property type="match status" value="1"/>
</dbReference>
<geneLocation type="chloroplast"/>
<name>PSBL_TAXBR</name>
<feature type="chain" id="PRO_0000219776" description="Photosystem II reaction center protein L">
    <location>
        <begin position="1"/>
        <end position="38"/>
    </location>
</feature>
<feature type="transmembrane region" description="Helical" evidence="1">
    <location>
        <begin position="17"/>
        <end position="37"/>
    </location>
</feature>
<sequence>MTQSNPNEQNVELNRTSLYWGLLLIFVLAVLFSNYFFN</sequence>
<proteinExistence type="inferred from homology"/>
<gene>
    <name evidence="1" type="primary">psbL</name>
</gene>
<reference key="1">
    <citation type="submission" date="2002-07" db="EMBL/GenBank/DDBJ databases">
        <title>Parsing out signal and noise for seed-plant phylogenetic inference.</title>
        <authorList>
            <person name="Graham S.W."/>
            <person name="Rai H.S."/>
            <person name="Ikegami K."/>
            <person name="Reeves P.A."/>
            <person name="Olmstead R.G."/>
        </authorList>
    </citation>
    <scope>NUCLEOTIDE SEQUENCE [GENOMIC DNA]</scope>
</reference>
<organism>
    <name type="scientific">Taxus brevifolia</name>
    <name type="common">Pacific yew</name>
    <dbReference type="NCBI Taxonomy" id="46220"/>
    <lineage>
        <taxon>Eukaryota</taxon>
        <taxon>Viridiplantae</taxon>
        <taxon>Streptophyta</taxon>
        <taxon>Embryophyta</taxon>
        <taxon>Tracheophyta</taxon>
        <taxon>Spermatophyta</taxon>
        <taxon>Pinopsida</taxon>
        <taxon>Pinidae</taxon>
        <taxon>Conifers II</taxon>
        <taxon>Cupressales</taxon>
        <taxon>Taxaceae</taxon>
        <taxon>Taxus</taxon>
    </lineage>
</organism>
<comment type="function">
    <text evidence="1">One of the components of the core complex of photosystem II (PSII). PSII is a light-driven water:plastoquinone oxidoreductase that uses light energy to abstract electrons from H(2)O, generating O(2) and a proton gradient subsequently used for ATP formation. It consists of a core antenna complex that captures photons, and an electron transfer chain that converts photonic excitation into a charge separation. This subunit is found at the monomer-monomer interface and is required for correct PSII assembly and/or dimerization.</text>
</comment>
<comment type="subunit">
    <text evidence="1">PSII is composed of 1 copy each of membrane proteins PsbA, PsbB, PsbC, PsbD, PsbE, PsbF, PsbH, PsbI, PsbJ, PsbK, PsbL, PsbM, PsbT, PsbX, PsbY, PsbZ, Psb30/Ycf12, at least 3 peripheral proteins of the oxygen-evolving complex and a large number of cofactors. It forms dimeric complexes.</text>
</comment>
<comment type="subcellular location">
    <subcellularLocation>
        <location evidence="1">Plastid</location>
        <location evidence="1">Chloroplast thylakoid membrane</location>
        <topology evidence="1">Single-pass membrane protein</topology>
    </subcellularLocation>
</comment>
<comment type="similarity">
    <text evidence="1">Belongs to the PsbL family.</text>
</comment>
<keyword id="KW-0150">Chloroplast</keyword>
<keyword id="KW-0472">Membrane</keyword>
<keyword id="KW-0602">Photosynthesis</keyword>
<keyword id="KW-0604">Photosystem II</keyword>
<keyword id="KW-0934">Plastid</keyword>
<keyword id="KW-0674">Reaction center</keyword>
<keyword id="KW-0793">Thylakoid</keyword>
<keyword id="KW-0812">Transmembrane</keyword>
<keyword id="KW-1133">Transmembrane helix</keyword>
<accession>Q6EYN0</accession>
<evidence type="ECO:0000255" key="1">
    <source>
        <dbReference type="HAMAP-Rule" id="MF_01317"/>
    </source>
</evidence>
<protein>
    <recommendedName>
        <fullName evidence="1">Photosystem II reaction center protein L</fullName>
        <shortName evidence="1">PSII-L</shortName>
    </recommendedName>
</protein>